<comment type="function">
    <text evidence="1">RuBisCO catalyzes two reactions: the carboxylation of D-ribulose 1,5-bisphosphate, the primary event in carbon dioxide fixation, as well as the oxidative fragmentation of the pentose substrate in the photorespiration process. Both reactions occur simultaneously and in competition at the same active site.</text>
</comment>
<comment type="catalytic activity">
    <reaction evidence="1">
        <text>2 (2R)-3-phosphoglycerate + 2 H(+) = D-ribulose 1,5-bisphosphate + CO2 + H2O</text>
        <dbReference type="Rhea" id="RHEA:23124"/>
        <dbReference type="ChEBI" id="CHEBI:15377"/>
        <dbReference type="ChEBI" id="CHEBI:15378"/>
        <dbReference type="ChEBI" id="CHEBI:16526"/>
        <dbReference type="ChEBI" id="CHEBI:57870"/>
        <dbReference type="ChEBI" id="CHEBI:58272"/>
        <dbReference type="EC" id="4.1.1.39"/>
    </reaction>
</comment>
<comment type="catalytic activity">
    <reaction evidence="1">
        <text>D-ribulose 1,5-bisphosphate + O2 = 2-phosphoglycolate + (2R)-3-phosphoglycerate + 2 H(+)</text>
        <dbReference type="Rhea" id="RHEA:36631"/>
        <dbReference type="ChEBI" id="CHEBI:15378"/>
        <dbReference type="ChEBI" id="CHEBI:15379"/>
        <dbReference type="ChEBI" id="CHEBI:57870"/>
        <dbReference type="ChEBI" id="CHEBI:58033"/>
        <dbReference type="ChEBI" id="CHEBI:58272"/>
    </reaction>
</comment>
<comment type="cofactor">
    <cofactor evidence="1">
        <name>Mg(2+)</name>
        <dbReference type="ChEBI" id="CHEBI:18420"/>
    </cofactor>
    <text evidence="1">Binds 1 Mg(2+) ion per subunit.</text>
</comment>
<comment type="subunit">
    <text evidence="1">Heterohexadecamer of 8 large chains and 8 small chains; disulfide-linked. The disulfide link is formed within the large subunit homodimers.</text>
</comment>
<comment type="subcellular location">
    <subcellularLocation>
        <location>Plastid</location>
        <location>Chloroplast</location>
    </subcellularLocation>
</comment>
<comment type="PTM">
    <text evidence="1">The disulfide bond which can form in the large chain dimeric partners within the hexadecamer appears to be associated with oxidative stress and protein turnover.</text>
</comment>
<comment type="miscellaneous">
    <text evidence="1">The basic functional RuBisCO is composed of a large chain homodimer in a 'head-to-tail' conformation. In form I RuBisCO this homodimer is arranged in a barrel-like tetramer with the small subunits forming a tetrameric 'cap' on each end of the 'barrel'.</text>
</comment>
<comment type="similarity">
    <text evidence="1">Belongs to the RuBisCO large chain family. Type I subfamily.</text>
</comment>
<keyword id="KW-0113">Calvin cycle</keyword>
<keyword id="KW-0120">Carbon dioxide fixation</keyword>
<keyword id="KW-0150">Chloroplast</keyword>
<keyword id="KW-1015">Disulfide bond</keyword>
<keyword id="KW-0456">Lyase</keyword>
<keyword id="KW-0460">Magnesium</keyword>
<keyword id="KW-0479">Metal-binding</keyword>
<keyword id="KW-0503">Monooxygenase</keyword>
<keyword id="KW-0560">Oxidoreductase</keyword>
<keyword id="KW-0601">Photorespiration</keyword>
<keyword id="KW-0602">Photosynthesis</keyword>
<keyword id="KW-0934">Plastid</keyword>
<evidence type="ECO:0000255" key="1">
    <source>
        <dbReference type="HAMAP-Rule" id="MF_01338"/>
    </source>
</evidence>
<name>RBL_CONTR</name>
<reference key="1">
    <citation type="journal article" date="1992" name="Ann. Mo. Bot. Gard.">
        <title>Monophyly of the Asteridae and identification of their major lineages inferred from DNA sequences of rbcL.</title>
        <authorList>
            <person name="Olmstead R.G."/>
            <person name="Michaels H.J."/>
            <person name="Scott K.M."/>
            <person name="Palmer J.D."/>
        </authorList>
        <dbReference type="AGRICOLA" id="IND93014998"/>
    </citation>
    <scope>NUCLEOTIDE SEQUENCE [GENOMIC DNA]</scope>
</reference>
<geneLocation type="chloroplast"/>
<organism>
    <name type="scientific">Convolvulus tricolor</name>
    <name type="common">Dwarf morning glory</name>
    <dbReference type="NCBI Taxonomy" id="4124"/>
    <lineage>
        <taxon>Eukaryota</taxon>
        <taxon>Viridiplantae</taxon>
        <taxon>Streptophyta</taxon>
        <taxon>Embryophyta</taxon>
        <taxon>Tracheophyta</taxon>
        <taxon>Spermatophyta</taxon>
        <taxon>Magnoliopsida</taxon>
        <taxon>eudicotyledons</taxon>
        <taxon>Gunneridae</taxon>
        <taxon>Pentapetalae</taxon>
        <taxon>asterids</taxon>
        <taxon>lamiids</taxon>
        <taxon>Solanales</taxon>
        <taxon>Convolvulaceae</taxon>
        <taxon>Convolvuleae</taxon>
        <taxon>Convolvulus</taxon>
    </lineage>
</organism>
<sequence>DILAAFRVTPQPGVPPEEAGAAVAAESSTGTWTTVWTDGLTNLDRYKGRCYRXXRVIGEKDQFIAYVAYPLDLFEEGSVTNMFTSIVGNVFGFKALRXLRLEDLRIPPAYVKTFQGPPHGIQVERDKLNKYGRPLLGCTIKPKLGLSAKNYGRAVYECLRGGLDFTKDDENVNSQPFMRWRDRFLFCAEAIYKAQAETGEIKGHYLNATAGTCEDMNKRAVFARELGVPIVMHDYLTGGFTANTSLAHYCRDNGLLLHIHRAMHAVIDRQKSHGMHFRVLAKALRMSGGDHIHAGTVVGKLEGEREITLGFVDLLRDDLVEQDRSRGIYFTQDWVSLPGVLPVASGGIHVWHMPALTEIFGDDSVLQFGGGTLGHPWGNAPGAVANRVALEACVQARNEGRDLAREGNEIIREACKWSPELAAACEVWKEIRFEFKPVDTLDPDEKK</sequence>
<feature type="chain" id="PRO_0000062415" description="Ribulose bisphosphate carboxylase large chain">
    <location>
        <begin position="1" status="less than"/>
        <end position="447"/>
    </location>
</feature>
<feature type="active site" description="Proton acceptor" evidence="1">
    <location>
        <position position="141"/>
    </location>
</feature>
<feature type="active site" description="Proton acceptor" evidence="1">
    <location>
        <position position="260"/>
    </location>
</feature>
<feature type="binding site" description="in homodimeric partner" evidence="1">
    <location>
        <position position="89"/>
    </location>
    <ligand>
        <name>substrate</name>
    </ligand>
</feature>
<feature type="binding site" evidence="1">
    <location>
        <position position="139"/>
    </location>
    <ligand>
        <name>substrate</name>
    </ligand>
</feature>
<feature type="binding site" evidence="1">
    <location>
        <position position="143"/>
    </location>
    <ligand>
        <name>substrate</name>
    </ligand>
</feature>
<feature type="binding site" description="via carbamate group" evidence="1">
    <location>
        <position position="167"/>
    </location>
    <ligand>
        <name>Mg(2+)</name>
        <dbReference type="ChEBI" id="CHEBI:18420"/>
    </ligand>
</feature>
<feature type="binding site" evidence="1">
    <location>
        <position position="169"/>
    </location>
    <ligand>
        <name>Mg(2+)</name>
        <dbReference type="ChEBI" id="CHEBI:18420"/>
    </ligand>
</feature>
<feature type="binding site" evidence="1">
    <location>
        <position position="170"/>
    </location>
    <ligand>
        <name>Mg(2+)</name>
        <dbReference type="ChEBI" id="CHEBI:18420"/>
    </ligand>
</feature>
<feature type="binding site" evidence="1">
    <location>
        <position position="261"/>
    </location>
    <ligand>
        <name>substrate</name>
    </ligand>
</feature>
<feature type="binding site" evidence="1">
    <location>
        <position position="293"/>
    </location>
    <ligand>
        <name>substrate</name>
    </ligand>
</feature>
<feature type="binding site" evidence="1">
    <location>
        <position position="345"/>
    </location>
    <ligand>
        <name>substrate</name>
    </ligand>
</feature>
<feature type="site" description="Transition state stabilizer" evidence="1">
    <location>
        <position position="300"/>
    </location>
</feature>
<feature type="modified residue" description="N6-carboxylysine" evidence="1">
    <location>
        <position position="167"/>
    </location>
</feature>
<feature type="disulfide bond" description="Interchain; in linked form" evidence="1">
    <location>
        <position position="213"/>
    </location>
</feature>
<feature type="non-terminal residue">
    <location>
        <position position="1"/>
    </location>
</feature>
<accession>Q05988</accession>
<dbReference type="EC" id="4.1.1.39" evidence="1"/>
<dbReference type="EMBL" id="L11683">
    <property type="protein sequence ID" value="AAA84131.1"/>
    <property type="molecule type" value="Genomic_DNA"/>
</dbReference>
<dbReference type="GO" id="GO:0009507">
    <property type="term" value="C:chloroplast"/>
    <property type="evidence" value="ECO:0007669"/>
    <property type="project" value="UniProtKB-SubCell"/>
</dbReference>
<dbReference type="GO" id="GO:0000287">
    <property type="term" value="F:magnesium ion binding"/>
    <property type="evidence" value="ECO:0007669"/>
    <property type="project" value="InterPro"/>
</dbReference>
<dbReference type="GO" id="GO:0004497">
    <property type="term" value="F:monooxygenase activity"/>
    <property type="evidence" value="ECO:0007669"/>
    <property type="project" value="UniProtKB-KW"/>
</dbReference>
<dbReference type="GO" id="GO:0016984">
    <property type="term" value="F:ribulose-bisphosphate carboxylase activity"/>
    <property type="evidence" value="ECO:0007669"/>
    <property type="project" value="UniProtKB-EC"/>
</dbReference>
<dbReference type="GO" id="GO:0009853">
    <property type="term" value="P:photorespiration"/>
    <property type="evidence" value="ECO:0007669"/>
    <property type="project" value="UniProtKB-KW"/>
</dbReference>
<dbReference type="GO" id="GO:0019253">
    <property type="term" value="P:reductive pentose-phosphate cycle"/>
    <property type="evidence" value="ECO:0007669"/>
    <property type="project" value="UniProtKB-KW"/>
</dbReference>
<dbReference type="CDD" id="cd08212">
    <property type="entry name" value="RuBisCO_large_I"/>
    <property type="match status" value="1"/>
</dbReference>
<dbReference type="FunFam" id="3.20.20.110:FF:000001">
    <property type="entry name" value="Ribulose bisphosphate carboxylase large chain"/>
    <property type="match status" value="1"/>
</dbReference>
<dbReference type="Gene3D" id="3.20.20.110">
    <property type="entry name" value="Ribulose bisphosphate carboxylase, large subunit, C-terminal domain"/>
    <property type="match status" value="1"/>
</dbReference>
<dbReference type="Gene3D" id="3.30.70.150">
    <property type="entry name" value="RuBisCO large subunit, N-terminal domain"/>
    <property type="match status" value="1"/>
</dbReference>
<dbReference type="HAMAP" id="MF_01338">
    <property type="entry name" value="RuBisCO_L_type1"/>
    <property type="match status" value="1"/>
</dbReference>
<dbReference type="InterPro" id="IPR033966">
    <property type="entry name" value="RuBisCO"/>
</dbReference>
<dbReference type="InterPro" id="IPR020878">
    <property type="entry name" value="RuBisCo_large_chain_AS"/>
</dbReference>
<dbReference type="InterPro" id="IPR000685">
    <property type="entry name" value="RuBisCO_lsu_C"/>
</dbReference>
<dbReference type="InterPro" id="IPR036376">
    <property type="entry name" value="RuBisCO_lsu_C_sf"/>
</dbReference>
<dbReference type="InterPro" id="IPR017443">
    <property type="entry name" value="RuBisCO_lsu_fd_N"/>
</dbReference>
<dbReference type="InterPro" id="IPR036422">
    <property type="entry name" value="RuBisCO_lsu_N_sf"/>
</dbReference>
<dbReference type="InterPro" id="IPR020888">
    <property type="entry name" value="RuBisCO_lsuI"/>
</dbReference>
<dbReference type="NCBIfam" id="NF003252">
    <property type="entry name" value="PRK04208.1"/>
    <property type="match status" value="1"/>
</dbReference>
<dbReference type="PANTHER" id="PTHR42704">
    <property type="entry name" value="RIBULOSE BISPHOSPHATE CARBOXYLASE"/>
    <property type="match status" value="1"/>
</dbReference>
<dbReference type="PANTHER" id="PTHR42704:SF16">
    <property type="entry name" value="RIBULOSE BISPHOSPHATE CARBOXYLASE LARGE CHAIN"/>
    <property type="match status" value="1"/>
</dbReference>
<dbReference type="Pfam" id="PF00016">
    <property type="entry name" value="RuBisCO_large"/>
    <property type="match status" value="1"/>
</dbReference>
<dbReference type="Pfam" id="PF02788">
    <property type="entry name" value="RuBisCO_large_N"/>
    <property type="match status" value="1"/>
</dbReference>
<dbReference type="SFLD" id="SFLDG01052">
    <property type="entry name" value="RuBisCO"/>
    <property type="match status" value="1"/>
</dbReference>
<dbReference type="SFLD" id="SFLDS00014">
    <property type="entry name" value="RuBisCO"/>
    <property type="match status" value="1"/>
</dbReference>
<dbReference type="SFLD" id="SFLDG00301">
    <property type="entry name" value="RuBisCO-like_proteins"/>
    <property type="match status" value="1"/>
</dbReference>
<dbReference type="SUPFAM" id="SSF51649">
    <property type="entry name" value="RuBisCo, C-terminal domain"/>
    <property type="match status" value="1"/>
</dbReference>
<dbReference type="SUPFAM" id="SSF54966">
    <property type="entry name" value="RuBisCO, large subunit, small (N-terminal) domain"/>
    <property type="match status" value="1"/>
</dbReference>
<dbReference type="PROSITE" id="PS00157">
    <property type="entry name" value="RUBISCO_LARGE"/>
    <property type="match status" value="1"/>
</dbReference>
<protein>
    <recommendedName>
        <fullName evidence="1">Ribulose bisphosphate carboxylase large chain</fullName>
        <shortName evidence="1">RuBisCO large subunit</shortName>
        <ecNumber evidence="1">4.1.1.39</ecNumber>
    </recommendedName>
</protein>
<gene>
    <name evidence="1" type="primary">rbcL</name>
</gene>
<proteinExistence type="inferred from homology"/>